<name>Y2637_MYCTU</name>
<sequence length="218" mass="23003">MDVEALLQSIPPLMVYLVVGAVVGIESLGIPLPGEIVLVSAAVLSSHPELAVNPIGVGGAAVIGAVVGDSIGYSIGRRFGLPLFDRLGRRFPKHFGPGHVALAERLFNRWGVRAVFLGRFIALLRIFAGPLAGALKMPYPRFLAANVTGGICWAGGTTALVYFAGMAAQHWLERFSWIALVIAVIAGITAAILLRERTSRAIAELEAEHCRKAGTTAA</sequence>
<keyword id="KW-1003">Cell membrane</keyword>
<keyword id="KW-0472">Membrane</keyword>
<keyword id="KW-1185">Reference proteome</keyword>
<keyword id="KW-0812">Transmembrane</keyword>
<keyword id="KW-1133">Transmembrane helix</keyword>
<accession>P9WP07</accession>
<accession>L0TA78</accession>
<accession>P63911</accession>
<accession>P71936</accession>
<evidence type="ECO:0000255" key="1"/>
<evidence type="ECO:0000305" key="2"/>
<proteinExistence type="evidence at protein level"/>
<protein>
    <recommendedName>
        <fullName>Uncharacterized membrane protein Rv2637</fullName>
    </recommendedName>
</protein>
<comment type="subcellular location">
    <subcellularLocation>
        <location evidence="2">Cell membrane</location>
        <topology evidence="2">Multi-pass membrane protein</topology>
    </subcellularLocation>
</comment>
<comment type="similarity">
    <text evidence="2">Belongs to the DedA family.</text>
</comment>
<dbReference type="EMBL" id="AL123456">
    <property type="protein sequence ID" value="CCP45435.1"/>
    <property type="molecule type" value="Genomic_DNA"/>
</dbReference>
<dbReference type="PIR" id="A70964">
    <property type="entry name" value="A70964"/>
</dbReference>
<dbReference type="RefSeq" id="WP_003413654.1">
    <property type="nucleotide sequence ID" value="NZ_NVQJ01000077.1"/>
</dbReference>
<dbReference type="STRING" id="83332.Rv2637"/>
<dbReference type="PaxDb" id="83332-Rv2637"/>
<dbReference type="DNASU" id="888616"/>
<dbReference type="KEGG" id="mtu:Rv2637"/>
<dbReference type="KEGG" id="mtv:RVBD_2637"/>
<dbReference type="TubercuList" id="Rv2637"/>
<dbReference type="eggNOG" id="COG0586">
    <property type="taxonomic scope" value="Bacteria"/>
</dbReference>
<dbReference type="InParanoid" id="P9WP07"/>
<dbReference type="OrthoDB" id="9813426at2"/>
<dbReference type="PhylomeDB" id="P9WP07"/>
<dbReference type="Proteomes" id="UP000001584">
    <property type="component" value="Chromosome"/>
</dbReference>
<dbReference type="GO" id="GO:0005886">
    <property type="term" value="C:plasma membrane"/>
    <property type="evidence" value="ECO:0007669"/>
    <property type="project" value="UniProtKB-SubCell"/>
</dbReference>
<dbReference type="InterPro" id="IPR032818">
    <property type="entry name" value="DedA-like"/>
</dbReference>
<dbReference type="InterPro" id="IPR032816">
    <property type="entry name" value="VTT_dom"/>
</dbReference>
<dbReference type="PANTHER" id="PTHR30353">
    <property type="entry name" value="INNER MEMBRANE PROTEIN DEDA-RELATED"/>
    <property type="match status" value="1"/>
</dbReference>
<dbReference type="PANTHER" id="PTHR30353:SF15">
    <property type="entry name" value="INNER MEMBRANE PROTEIN YABI"/>
    <property type="match status" value="1"/>
</dbReference>
<dbReference type="Pfam" id="PF09335">
    <property type="entry name" value="VTT_dom"/>
    <property type="match status" value="1"/>
</dbReference>
<feature type="chain" id="PRO_0000161430" description="Uncharacterized membrane protein Rv2637">
    <location>
        <begin position="1"/>
        <end position="218"/>
    </location>
</feature>
<feature type="transmembrane region" description="Helical" evidence="1">
    <location>
        <begin position="10"/>
        <end position="30"/>
    </location>
</feature>
<feature type="transmembrane region" description="Helical" evidence="1">
    <location>
        <begin position="55"/>
        <end position="75"/>
    </location>
</feature>
<feature type="transmembrane region" description="Helical" evidence="1">
    <location>
        <begin position="147"/>
        <end position="167"/>
    </location>
</feature>
<feature type="transmembrane region" description="Helical" evidence="1">
    <location>
        <begin position="175"/>
        <end position="195"/>
    </location>
</feature>
<gene>
    <name type="ordered locus">Rv2637</name>
    <name type="ORF">MTCY441.07</name>
</gene>
<organism>
    <name type="scientific">Mycobacterium tuberculosis (strain ATCC 25618 / H37Rv)</name>
    <dbReference type="NCBI Taxonomy" id="83332"/>
    <lineage>
        <taxon>Bacteria</taxon>
        <taxon>Bacillati</taxon>
        <taxon>Actinomycetota</taxon>
        <taxon>Actinomycetes</taxon>
        <taxon>Mycobacteriales</taxon>
        <taxon>Mycobacteriaceae</taxon>
        <taxon>Mycobacterium</taxon>
        <taxon>Mycobacterium tuberculosis complex</taxon>
    </lineage>
</organism>
<reference key="1">
    <citation type="journal article" date="1998" name="Nature">
        <title>Deciphering the biology of Mycobacterium tuberculosis from the complete genome sequence.</title>
        <authorList>
            <person name="Cole S.T."/>
            <person name="Brosch R."/>
            <person name="Parkhill J."/>
            <person name="Garnier T."/>
            <person name="Churcher C.M."/>
            <person name="Harris D.E."/>
            <person name="Gordon S.V."/>
            <person name="Eiglmeier K."/>
            <person name="Gas S."/>
            <person name="Barry C.E. III"/>
            <person name="Tekaia F."/>
            <person name="Badcock K."/>
            <person name="Basham D."/>
            <person name="Brown D."/>
            <person name="Chillingworth T."/>
            <person name="Connor R."/>
            <person name="Davies R.M."/>
            <person name="Devlin K."/>
            <person name="Feltwell T."/>
            <person name="Gentles S."/>
            <person name="Hamlin N."/>
            <person name="Holroyd S."/>
            <person name="Hornsby T."/>
            <person name="Jagels K."/>
            <person name="Krogh A."/>
            <person name="McLean J."/>
            <person name="Moule S."/>
            <person name="Murphy L.D."/>
            <person name="Oliver S."/>
            <person name="Osborne J."/>
            <person name="Quail M.A."/>
            <person name="Rajandream M.A."/>
            <person name="Rogers J."/>
            <person name="Rutter S."/>
            <person name="Seeger K."/>
            <person name="Skelton S."/>
            <person name="Squares S."/>
            <person name="Squares R."/>
            <person name="Sulston J.E."/>
            <person name="Taylor K."/>
            <person name="Whitehead S."/>
            <person name="Barrell B.G."/>
        </authorList>
    </citation>
    <scope>NUCLEOTIDE SEQUENCE [LARGE SCALE GENOMIC DNA]</scope>
    <source>
        <strain>ATCC 25618 / H37Rv</strain>
    </source>
</reference>
<reference key="2">
    <citation type="journal article" date="2011" name="Mol. Cell. Proteomics">
        <title>Proteogenomic analysis of Mycobacterium tuberculosis by high resolution mass spectrometry.</title>
        <authorList>
            <person name="Kelkar D.S."/>
            <person name="Kumar D."/>
            <person name="Kumar P."/>
            <person name="Balakrishnan L."/>
            <person name="Muthusamy B."/>
            <person name="Yadav A.K."/>
            <person name="Shrivastava P."/>
            <person name="Marimuthu A."/>
            <person name="Anand S."/>
            <person name="Sundaram H."/>
            <person name="Kingsbury R."/>
            <person name="Harsha H.C."/>
            <person name="Nair B."/>
            <person name="Prasad T.S."/>
            <person name="Chauhan D.S."/>
            <person name="Katoch K."/>
            <person name="Katoch V.M."/>
            <person name="Kumar P."/>
            <person name="Chaerkady R."/>
            <person name="Ramachandran S."/>
            <person name="Dash D."/>
            <person name="Pandey A."/>
        </authorList>
    </citation>
    <scope>IDENTIFICATION BY MASS SPECTROMETRY [LARGE SCALE ANALYSIS]</scope>
    <source>
        <strain>ATCC 25618 / H37Rv</strain>
    </source>
</reference>